<name>EF1A_AERPE</name>
<keyword id="KW-0002">3D-structure</keyword>
<keyword id="KW-0963">Cytoplasm</keyword>
<keyword id="KW-0251">Elongation factor</keyword>
<keyword id="KW-0342">GTP-binding</keyword>
<keyword id="KW-0378">Hydrolase</keyword>
<keyword id="KW-0460">Magnesium</keyword>
<keyword id="KW-0479">Metal-binding</keyword>
<keyword id="KW-0547">Nucleotide-binding</keyword>
<keyword id="KW-0648">Protein biosynthesis</keyword>
<keyword id="KW-1185">Reference proteome</keyword>
<feature type="chain" id="PRO_0000090974" description="Elongation factor 1-alpha">
    <location>
        <begin position="1"/>
        <end position="437"/>
    </location>
</feature>
<feature type="domain" description="tr-type G">
    <location>
        <begin position="4"/>
        <end position="229"/>
    </location>
</feature>
<feature type="region of interest" description="G1" evidence="1">
    <location>
        <begin position="13"/>
        <end position="20"/>
    </location>
</feature>
<feature type="region of interest" description="G2" evidence="1">
    <location>
        <begin position="69"/>
        <end position="73"/>
    </location>
</feature>
<feature type="region of interest" description="G3" evidence="1">
    <location>
        <begin position="90"/>
        <end position="93"/>
    </location>
</feature>
<feature type="region of interest" description="G4" evidence="1">
    <location>
        <begin position="152"/>
        <end position="155"/>
    </location>
</feature>
<feature type="region of interest" description="G5" evidence="1">
    <location>
        <begin position="193"/>
        <end position="195"/>
    </location>
</feature>
<feature type="binding site" evidence="2">
    <location>
        <begin position="13"/>
        <end position="20"/>
    </location>
    <ligand>
        <name>GTP</name>
        <dbReference type="ChEBI" id="CHEBI:37565"/>
    </ligand>
</feature>
<feature type="binding site" evidence="2">
    <location>
        <position position="20"/>
    </location>
    <ligand>
        <name>Mg(2+)</name>
        <dbReference type="ChEBI" id="CHEBI:18420"/>
    </ligand>
</feature>
<feature type="binding site" evidence="2">
    <location>
        <begin position="90"/>
        <end position="94"/>
    </location>
    <ligand>
        <name>GTP</name>
        <dbReference type="ChEBI" id="CHEBI:37565"/>
    </ligand>
</feature>
<feature type="binding site" evidence="2">
    <location>
        <begin position="152"/>
        <end position="155"/>
    </location>
    <ligand>
        <name>GTP</name>
        <dbReference type="ChEBI" id="CHEBI:37565"/>
    </ligand>
</feature>
<feature type="strand" evidence="3">
    <location>
        <begin position="6"/>
        <end position="12"/>
    </location>
</feature>
<feature type="helix" evidence="3">
    <location>
        <begin position="19"/>
        <end position="29"/>
    </location>
</feature>
<feature type="helix" evidence="3">
    <location>
        <begin position="35"/>
        <end position="47"/>
    </location>
</feature>
<feature type="helix" evidence="3">
    <location>
        <begin position="51"/>
        <end position="53"/>
    </location>
</feature>
<feature type="helix" evidence="3">
    <location>
        <begin position="56"/>
        <end position="59"/>
    </location>
</feature>
<feature type="helix" evidence="3">
    <location>
        <begin position="63"/>
        <end position="68"/>
    </location>
</feature>
<feature type="strand" evidence="3">
    <location>
        <begin position="75"/>
        <end position="80"/>
    </location>
</feature>
<feature type="strand" evidence="3">
    <location>
        <begin position="85"/>
        <end position="90"/>
    </location>
</feature>
<feature type="helix" evidence="3">
    <location>
        <begin position="95"/>
        <end position="97"/>
    </location>
</feature>
<feature type="helix" evidence="3">
    <location>
        <begin position="98"/>
        <end position="106"/>
    </location>
</feature>
<feature type="strand" evidence="3">
    <location>
        <begin position="109"/>
        <end position="116"/>
    </location>
</feature>
<feature type="helix" evidence="3">
    <location>
        <begin position="121"/>
        <end position="125"/>
    </location>
</feature>
<feature type="helix" evidence="3">
    <location>
        <begin position="131"/>
        <end position="141"/>
    </location>
</feature>
<feature type="strand" evidence="3">
    <location>
        <begin position="146"/>
        <end position="152"/>
    </location>
</feature>
<feature type="turn" evidence="3">
    <location>
        <begin position="157"/>
        <end position="161"/>
    </location>
</feature>
<feature type="helix" evidence="3">
    <location>
        <begin position="163"/>
        <end position="179"/>
    </location>
</feature>
<feature type="helix" evidence="3">
    <location>
        <begin position="184"/>
        <end position="186"/>
    </location>
</feature>
<feature type="strand" evidence="3">
    <location>
        <begin position="189"/>
        <end position="191"/>
    </location>
</feature>
<feature type="turn" evidence="3">
    <location>
        <begin position="194"/>
        <end position="196"/>
    </location>
</feature>
<feature type="turn" evidence="3">
    <location>
        <begin position="198"/>
        <end position="200"/>
    </location>
</feature>
<feature type="helix" evidence="3">
    <location>
        <begin position="215"/>
        <end position="220"/>
    </location>
</feature>
<feature type="strand" evidence="3">
    <location>
        <begin position="234"/>
        <end position="236"/>
    </location>
</feature>
<feature type="strand" evidence="3">
    <location>
        <begin position="238"/>
        <end position="243"/>
    </location>
</feature>
<feature type="turn" evidence="3">
    <location>
        <begin position="244"/>
        <end position="246"/>
    </location>
</feature>
<feature type="strand" evidence="3">
    <location>
        <begin position="247"/>
        <end position="253"/>
    </location>
</feature>
<feature type="strand" evidence="3">
    <location>
        <begin position="264"/>
        <end position="268"/>
    </location>
</feature>
<feature type="turn" evidence="3">
    <location>
        <begin position="269"/>
        <end position="271"/>
    </location>
</feature>
<feature type="strand" evidence="3">
    <location>
        <begin position="272"/>
        <end position="281"/>
    </location>
</feature>
<feature type="strand" evidence="3">
    <location>
        <begin position="284"/>
        <end position="289"/>
    </location>
</feature>
<feature type="strand" evidence="3">
    <location>
        <begin position="294"/>
        <end position="300"/>
    </location>
</feature>
<feature type="helix" evidence="3">
    <location>
        <begin position="304"/>
        <end position="306"/>
    </location>
</feature>
<feature type="strand" evidence="3">
    <location>
        <begin position="312"/>
        <end position="318"/>
    </location>
</feature>
<feature type="strand" evidence="3">
    <location>
        <begin position="322"/>
        <end position="332"/>
    </location>
</feature>
<feature type="strand" evidence="3">
    <location>
        <begin position="346"/>
        <end position="349"/>
    </location>
</feature>
<feature type="strand" evidence="3">
    <location>
        <begin position="352"/>
        <end position="365"/>
    </location>
</feature>
<feature type="turn" evidence="3">
    <location>
        <begin position="367"/>
        <end position="369"/>
    </location>
</feature>
<feature type="strand" evidence="3">
    <location>
        <begin position="372"/>
        <end position="376"/>
    </location>
</feature>
<feature type="strand" evidence="3">
    <location>
        <begin position="385"/>
        <end position="394"/>
    </location>
</feature>
<feature type="turn" evidence="3">
    <location>
        <begin position="401"/>
        <end position="403"/>
    </location>
</feature>
<feature type="helix" evidence="3">
    <location>
        <begin position="405"/>
        <end position="407"/>
    </location>
</feature>
<feature type="strand" evidence="3">
    <location>
        <begin position="408"/>
        <end position="414"/>
    </location>
</feature>
<feature type="strand" evidence="3">
    <location>
        <begin position="417"/>
        <end position="429"/>
    </location>
</feature>
<protein>
    <recommendedName>
        <fullName evidence="2">Elongation factor 1-alpha</fullName>
        <shortName evidence="2">EF-1-alpha</shortName>
        <ecNumber evidence="2">3.6.5.3</ecNumber>
    </recommendedName>
    <alternativeName>
        <fullName evidence="2">Elongation factor Tu</fullName>
        <shortName evidence="2">EF-Tu</shortName>
    </alternativeName>
</protein>
<comment type="function">
    <text evidence="2">GTP hydrolase that promotes the GTP-dependent binding of aminoacyl-tRNA to the A-site of ribosomes during protein biosynthesis.</text>
</comment>
<comment type="catalytic activity">
    <reaction evidence="2">
        <text>GTP + H2O = GDP + phosphate + H(+)</text>
        <dbReference type="Rhea" id="RHEA:19669"/>
        <dbReference type="ChEBI" id="CHEBI:15377"/>
        <dbReference type="ChEBI" id="CHEBI:15378"/>
        <dbReference type="ChEBI" id="CHEBI:37565"/>
        <dbReference type="ChEBI" id="CHEBI:43474"/>
        <dbReference type="ChEBI" id="CHEBI:58189"/>
        <dbReference type="EC" id="3.6.5.3"/>
    </reaction>
    <physiologicalReaction direction="left-to-right" evidence="2">
        <dbReference type="Rhea" id="RHEA:19670"/>
    </physiologicalReaction>
</comment>
<comment type="interaction">
    <interactant intactId="EBI-15880729">
        <id>Q9YAV0</id>
    </interactant>
    <interactant intactId="EBI-15880754">
        <id>Q9YAZ5</id>
        <label>pelA</label>
    </interactant>
    <organismsDiffer>false</organismsDiffer>
    <experiments>3</experiments>
</comment>
<comment type="interaction">
    <interactant intactId="EBI-15880729">
        <id>Q9YAV0</id>
    </interactant>
    <interactant intactId="EBI-15887661">
        <id>Q9YAF1</id>
        <label>prf1</label>
    </interactant>
    <organismsDiffer>false</organismsDiffer>
    <experiments>3</experiments>
</comment>
<comment type="subcellular location">
    <subcellularLocation>
        <location evidence="2">Cytoplasm</location>
    </subcellularLocation>
</comment>
<comment type="similarity">
    <text evidence="2">Belongs to the TRAFAC class translation factor GTPase superfamily. Classic translation factor GTPase family. EF-Tu/EF-1A subfamily.</text>
</comment>
<gene>
    <name evidence="2" type="primary">tuf</name>
    <name type="ordered locus">APE_1844</name>
</gene>
<proteinExistence type="evidence at protein level"/>
<dbReference type="EC" id="3.6.5.3" evidence="2"/>
<dbReference type="EMBL" id="BA000002">
    <property type="protein sequence ID" value="BAA80848.1"/>
    <property type="molecule type" value="Genomic_DNA"/>
</dbReference>
<dbReference type="PIR" id="C72570">
    <property type="entry name" value="C72570"/>
</dbReference>
<dbReference type="RefSeq" id="WP_010866631.1">
    <property type="nucleotide sequence ID" value="NC_000854.2"/>
</dbReference>
<dbReference type="PDB" id="3VMF">
    <property type="method" value="X-ray"/>
    <property type="resolution" value="2.30 A"/>
    <property type="chains" value="A=1-437"/>
</dbReference>
<dbReference type="PDB" id="3WXM">
    <property type="method" value="X-ray"/>
    <property type="resolution" value="2.30 A"/>
    <property type="chains" value="A/C/E/G=1-437"/>
</dbReference>
<dbReference type="PDB" id="4CXG">
    <property type="method" value="EM"/>
    <property type="resolution" value="8.70 A"/>
    <property type="chains" value="A=1-437"/>
</dbReference>
<dbReference type="PDB" id="4CXH">
    <property type="method" value="EM"/>
    <property type="resolution" value="8.90 A"/>
    <property type="chains" value="A=1-437"/>
</dbReference>
<dbReference type="PDB" id="6JI2">
    <property type="method" value="X-ray"/>
    <property type="resolution" value="3.00 A"/>
    <property type="chains" value="A/E=1-437"/>
</dbReference>
<dbReference type="PDBsum" id="3VMF"/>
<dbReference type="PDBsum" id="3WXM"/>
<dbReference type="PDBsum" id="4CXG"/>
<dbReference type="PDBsum" id="4CXH"/>
<dbReference type="PDBsum" id="6JI2"/>
<dbReference type="SMR" id="Q9YAV0"/>
<dbReference type="DIP" id="DIP-59399N"/>
<dbReference type="IntAct" id="Q9YAV0">
    <property type="interactions" value="2"/>
</dbReference>
<dbReference type="STRING" id="272557.APE_1844"/>
<dbReference type="EnsemblBacteria" id="BAA80848">
    <property type="protein sequence ID" value="BAA80848"/>
    <property type="gene ID" value="APE_1844"/>
</dbReference>
<dbReference type="GeneID" id="1446283"/>
<dbReference type="KEGG" id="ape:APE_1844"/>
<dbReference type="PATRIC" id="fig|272557.25.peg.1237"/>
<dbReference type="eggNOG" id="arCOG01561">
    <property type="taxonomic scope" value="Archaea"/>
</dbReference>
<dbReference type="EvolutionaryTrace" id="Q9YAV0"/>
<dbReference type="Proteomes" id="UP000002518">
    <property type="component" value="Chromosome"/>
</dbReference>
<dbReference type="GO" id="GO:0005737">
    <property type="term" value="C:cytoplasm"/>
    <property type="evidence" value="ECO:0007669"/>
    <property type="project" value="UniProtKB-SubCell"/>
</dbReference>
<dbReference type="GO" id="GO:0005525">
    <property type="term" value="F:GTP binding"/>
    <property type="evidence" value="ECO:0007669"/>
    <property type="project" value="UniProtKB-UniRule"/>
</dbReference>
<dbReference type="GO" id="GO:0003924">
    <property type="term" value="F:GTPase activity"/>
    <property type="evidence" value="ECO:0007669"/>
    <property type="project" value="InterPro"/>
</dbReference>
<dbReference type="GO" id="GO:0003746">
    <property type="term" value="F:translation elongation factor activity"/>
    <property type="evidence" value="ECO:0007669"/>
    <property type="project" value="UniProtKB-UniRule"/>
</dbReference>
<dbReference type="CDD" id="cd01883">
    <property type="entry name" value="EF1_alpha"/>
    <property type="match status" value="1"/>
</dbReference>
<dbReference type="CDD" id="cd03693">
    <property type="entry name" value="EF1_alpha_II"/>
    <property type="match status" value="1"/>
</dbReference>
<dbReference type="CDD" id="cd03705">
    <property type="entry name" value="EF1_alpha_III"/>
    <property type="match status" value="1"/>
</dbReference>
<dbReference type="FunFam" id="2.40.30.10:FF:000003">
    <property type="entry name" value="Elongation factor 1-alpha"/>
    <property type="match status" value="1"/>
</dbReference>
<dbReference type="FunFam" id="2.40.30.10:FF:000005">
    <property type="entry name" value="Elongation factor 1-alpha"/>
    <property type="match status" value="1"/>
</dbReference>
<dbReference type="FunFam" id="3.40.50.300:FF:000255">
    <property type="entry name" value="Elongation factor 1-alpha"/>
    <property type="match status" value="1"/>
</dbReference>
<dbReference type="Gene3D" id="3.40.50.300">
    <property type="entry name" value="P-loop containing nucleotide triphosphate hydrolases"/>
    <property type="match status" value="1"/>
</dbReference>
<dbReference type="Gene3D" id="2.40.30.10">
    <property type="entry name" value="Translation factors"/>
    <property type="match status" value="2"/>
</dbReference>
<dbReference type="HAMAP" id="MF_00118_A">
    <property type="entry name" value="EF_Tu_A"/>
    <property type="match status" value="1"/>
</dbReference>
<dbReference type="InterPro" id="IPR004161">
    <property type="entry name" value="EFTu-like_2"/>
</dbReference>
<dbReference type="InterPro" id="IPR031157">
    <property type="entry name" value="G_TR_CS"/>
</dbReference>
<dbReference type="InterPro" id="IPR054696">
    <property type="entry name" value="GTP-eEF1A_C"/>
</dbReference>
<dbReference type="InterPro" id="IPR027417">
    <property type="entry name" value="P-loop_NTPase"/>
</dbReference>
<dbReference type="InterPro" id="IPR005225">
    <property type="entry name" value="Small_GTP-bd"/>
</dbReference>
<dbReference type="InterPro" id="IPR000795">
    <property type="entry name" value="T_Tr_GTP-bd_dom"/>
</dbReference>
<dbReference type="InterPro" id="IPR050100">
    <property type="entry name" value="TRAFAC_GTPase_members"/>
</dbReference>
<dbReference type="InterPro" id="IPR009000">
    <property type="entry name" value="Transl_B-barrel_sf"/>
</dbReference>
<dbReference type="InterPro" id="IPR009001">
    <property type="entry name" value="Transl_elong_EF1A/Init_IF2_C"/>
</dbReference>
<dbReference type="InterPro" id="IPR004539">
    <property type="entry name" value="Transl_elong_EF1A_euk/arc"/>
</dbReference>
<dbReference type="NCBIfam" id="TIGR00483">
    <property type="entry name" value="EF-1_alpha"/>
    <property type="match status" value="1"/>
</dbReference>
<dbReference type="NCBIfam" id="NF008969">
    <property type="entry name" value="PRK12317.1"/>
    <property type="match status" value="1"/>
</dbReference>
<dbReference type="NCBIfam" id="TIGR00231">
    <property type="entry name" value="small_GTP"/>
    <property type="match status" value="1"/>
</dbReference>
<dbReference type="PANTHER" id="PTHR23115">
    <property type="entry name" value="TRANSLATION FACTOR"/>
    <property type="match status" value="1"/>
</dbReference>
<dbReference type="Pfam" id="PF22594">
    <property type="entry name" value="GTP-eEF1A_C"/>
    <property type="match status" value="1"/>
</dbReference>
<dbReference type="Pfam" id="PF00009">
    <property type="entry name" value="GTP_EFTU"/>
    <property type="match status" value="1"/>
</dbReference>
<dbReference type="Pfam" id="PF03144">
    <property type="entry name" value="GTP_EFTU_D2"/>
    <property type="match status" value="1"/>
</dbReference>
<dbReference type="PRINTS" id="PR00315">
    <property type="entry name" value="ELONGATNFCT"/>
</dbReference>
<dbReference type="SUPFAM" id="SSF50465">
    <property type="entry name" value="EF-Tu/eEF-1alpha/eIF2-gamma C-terminal domain"/>
    <property type="match status" value="1"/>
</dbReference>
<dbReference type="SUPFAM" id="SSF52540">
    <property type="entry name" value="P-loop containing nucleoside triphosphate hydrolases"/>
    <property type="match status" value="1"/>
</dbReference>
<dbReference type="SUPFAM" id="SSF50447">
    <property type="entry name" value="Translation proteins"/>
    <property type="match status" value="1"/>
</dbReference>
<dbReference type="PROSITE" id="PS00301">
    <property type="entry name" value="G_TR_1"/>
    <property type="match status" value="1"/>
</dbReference>
<dbReference type="PROSITE" id="PS51722">
    <property type="entry name" value="G_TR_2"/>
    <property type="match status" value="1"/>
</dbReference>
<accession>Q9YAV0</accession>
<sequence>MAEKPHMNLVVIGHVDHGKSTLVGHLLYRLGYIEEKKLKELEEQAKSRGKESFKFAWILDKMKEERERGITIDLTFMKFETKKYVFTIIDAPGHRDFVKNMITGASQADAAILVVSARKGEFEAGMSTEGQTREHLLLARTMGIEQIIVAVNKMDAPDVNYDQKRYEFVVSVLKKFMKGLGYQVDKIPFIPVSAWKGDNLIERSPNMPWYNGPTLVEALDQLQPPAKPVDKPLRIPVQNVYSIPGAGTVPVGRVETGVLRVGDKVVFMPPGVVGEVRSIEMHYQQLQQAEPGDNIGFAVRGVSKSDIKRGDVAGHLDKPPTVAEEFEARIFVIWHPSAITVGYTPVIHVHTASVSSRIIEIKAKLDPKTGQVVEQNPQFLKAGDAAIVRFKPVKPLVVEKFSEIPQLGRFAMRDMNRTVGIGIVTDVKPAKVDIKAK</sequence>
<evidence type="ECO:0000250" key="1"/>
<evidence type="ECO:0000255" key="2">
    <source>
        <dbReference type="HAMAP-Rule" id="MF_00118"/>
    </source>
</evidence>
<evidence type="ECO:0007829" key="3">
    <source>
        <dbReference type="PDB" id="3VMF"/>
    </source>
</evidence>
<organism>
    <name type="scientific">Aeropyrum pernix (strain ATCC 700893 / DSM 11879 / JCM 9820 / NBRC 100138 / K1)</name>
    <dbReference type="NCBI Taxonomy" id="272557"/>
    <lineage>
        <taxon>Archaea</taxon>
        <taxon>Thermoproteota</taxon>
        <taxon>Thermoprotei</taxon>
        <taxon>Desulfurococcales</taxon>
        <taxon>Desulfurococcaceae</taxon>
        <taxon>Aeropyrum</taxon>
    </lineage>
</organism>
<reference key="1">
    <citation type="journal article" date="1999" name="DNA Res.">
        <title>Complete genome sequence of an aerobic hyper-thermophilic crenarchaeon, Aeropyrum pernix K1.</title>
        <authorList>
            <person name="Kawarabayasi Y."/>
            <person name="Hino Y."/>
            <person name="Horikawa H."/>
            <person name="Yamazaki S."/>
            <person name="Haikawa Y."/>
            <person name="Jin-no K."/>
            <person name="Takahashi M."/>
            <person name="Sekine M."/>
            <person name="Baba S."/>
            <person name="Ankai A."/>
            <person name="Kosugi H."/>
            <person name="Hosoyama A."/>
            <person name="Fukui S."/>
            <person name="Nagai Y."/>
            <person name="Nishijima K."/>
            <person name="Nakazawa H."/>
            <person name="Takamiya M."/>
            <person name="Masuda S."/>
            <person name="Funahashi T."/>
            <person name="Tanaka T."/>
            <person name="Kudoh Y."/>
            <person name="Yamazaki J."/>
            <person name="Kushida N."/>
            <person name="Oguchi A."/>
            <person name="Aoki K."/>
            <person name="Kubota K."/>
            <person name="Nakamura Y."/>
            <person name="Nomura N."/>
            <person name="Sako Y."/>
            <person name="Kikuchi H."/>
        </authorList>
    </citation>
    <scope>NUCLEOTIDE SEQUENCE [LARGE SCALE GENOMIC DNA]</scope>
    <source>
        <strain>ATCC 700893 / DSM 11879 / JCM 9820 / NBRC 100138 / K1</strain>
    </source>
</reference>